<evidence type="ECO:0000250" key="1"/>
<evidence type="ECO:0000255" key="2">
    <source>
        <dbReference type="HAMAP-Rule" id="MF_00118"/>
    </source>
</evidence>
<gene>
    <name evidence="2" type="primary">tuf2</name>
    <name type="ordered locus">Rmag_0818</name>
</gene>
<comment type="function">
    <text evidence="2">GTP hydrolase that promotes the GTP-dependent binding of aminoacyl-tRNA to the A-site of ribosomes during protein biosynthesis.</text>
</comment>
<comment type="catalytic activity">
    <reaction evidence="2">
        <text>GTP + H2O = GDP + phosphate + H(+)</text>
        <dbReference type="Rhea" id="RHEA:19669"/>
        <dbReference type="ChEBI" id="CHEBI:15377"/>
        <dbReference type="ChEBI" id="CHEBI:15378"/>
        <dbReference type="ChEBI" id="CHEBI:37565"/>
        <dbReference type="ChEBI" id="CHEBI:43474"/>
        <dbReference type="ChEBI" id="CHEBI:58189"/>
        <dbReference type="EC" id="3.6.5.3"/>
    </reaction>
    <physiologicalReaction direction="left-to-right" evidence="2">
        <dbReference type="Rhea" id="RHEA:19670"/>
    </physiologicalReaction>
</comment>
<comment type="subunit">
    <text evidence="2">Monomer.</text>
</comment>
<comment type="subcellular location">
    <subcellularLocation>
        <location evidence="2">Cytoplasm</location>
    </subcellularLocation>
</comment>
<comment type="similarity">
    <text evidence="2">Belongs to the TRAFAC class translation factor GTPase superfamily. Classic translation factor GTPase family. EF-Tu/EF-1A subfamily.</text>
</comment>
<accession>A1AX82</accession>
<sequence length="396" mass="43388">MSKEKFERTKPHVNVGTIGHVDHGKTTLTAAITKIMSKAHGGEFKDYSDIDNAPEERERGITISTAHVEYESEARHYAHVDCPGHADYVKNMITGAAQMDGAIIVIAATDGPMAQTREHILLSKQVGVPYIIVYMNKADMVDDEELVELVELEIRELLDEYDFPGDDTPVIFGSALKALEDDTSDIGVPSIIKLVEALDTYIPTPKRDTDKLFLMPIEDVFSISGRGTVVTGRIEAGIVNVGDELEIVGIKDTQTTTCTGVEMFRKLLDSGEAGDNVGVLLRGTKREEVERGQVLAKPGSIKPHSKFEAEVYILSKDEGGRHTPFFNNYRPQFYFRTTDVTGACQLPDGVEMVMPGDNVKMQVELLSPIAMEDGLRFAIREGGRTVGAGVVSKVAD</sequence>
<keyword id="KW-0963">Cytoplasm</keyword>
<keyword id="KW-0251">Elongation factor</keyword>
<keyword id="KW-0342">GTP-binding</keyword>
<keyword id="KW-0378">Hydrolase</keyword>
<keyword id="KW-0460">Magnesium</keyword>
<keyword id="KW-0479">Metal-binding</keyword>
<keyword id="KW-0547">Nucleotide-binding</keyword>
<keyword id="KW-0648">Protein biosynthesis</keyword>
<reference key="1">
    <citation type="journal article" date="2007" name="Science">
        <title>The Calyptogena magnifica chemoautotrophic symbiont genome.</title>
        <authorList>
            <person name="Newton I.L.G."/>
            <person name="Woyke T."/>
            <person name="Auchtung T.A."/>
            <person name="Dilly G.F."/>
            <person name="Dutton R.J."/>
            <person name="Fisher M.C."/>
            <person name="Fontanez K.M."/>
            <person name="Lau E."/>
            <person name="Stewart F.J."/>
            <person name="Richardson P.M."/>
            <person name="Barry K.W."/>
            <person name="Saunders E."/>
            <person name="Detter J.C."/>
            <person name="Wu D."/>
            <person name="Eisen J.A."/>
            <person name="Cavanaugh C.M."/>
        </authorList>
    </citation>
    <scope>NUCLEOTIDE SEQUENCE [LARGE SCALE GENOMIC DNA]</scope>
</reference>
<feature type="chain" id="PRO_0000337509" description="Elongation factor Tu 2">
    <location>
        <begin position="1"/>
        <end position="396"/>
    </location>
</feature>
<feature type="domain" description="tr-type G">
    <location>
        <begin position="10"/>
        <end position="206"/>
    </location>
</feature>
<feature type="region of interest" description="G1" evidence="1">
    <location>
        <begin position="19"/>
        <end position="26"/>
    </location>
</feature>
<feature type="region of interest" description="G2" evidence="1">
    <location>
        <begin position="60"/>
        <end position="64"/>
    </location>
</feature>
<feature type="region of interest" description="G3" evidence="1">
    <location>
        <begin position="81"/>
        <end position="84"/>
    </location>
</feature>
<feature type="region of interest" description="G4" evidence="1">
    <location>
        <begin position="136"/>
        <end position="139"/>
    </location>
</feature>
<feature type="region of interest" description="G5" evidence="1">
    <location>
        <begin position="174"/>
        <end position="176"/>
    </location>
</feature>
<feature type="binding site" evidence="2">
    <location>
        <begin position="19"/>
        <end position="26"/>
    </location>
    <ligand>
        <name>GTP</name>
        <dbReference type="ChEBI" id="CHEBI:37565"/>
    </ligand>
</feature>
<feature type="binding site" evidence="2">
    <location>
        <position position="26"/>
    </location>
    <ligand>
        <name>Mg(2+)</name>
        <dbReference type="ChEBI" id="CHEBI:18420"/>
    </ligand>
</feature>
<feature type="binding site" evidence="2">
    <location>
        <begin position="81"/>
        <end position="85"/>
    </location>
    <ligand>
        <name>GTP</name>
        <dbReference type="ChEBI" id="CHEBI:37565"/>
    </ligand>
</feature>
<feature type="binding site" evidence="2">
    <location>
        <begin position="136"/>
        <end position="139"/>
    </location>
    <ligand>
        <name>GTP</name>
        <dbReference type="ChEBI" id="CHEBI:37565"/>
    </ligand>
</feature>
<proteinExistence type="inferred from homology"/>
<organism>
    <name type="scientific">Ruthia magnifica subsp. Calyptogena magnifica</name>
    <dbReference type="NCBI Taxonomy" id="413404"/>
    <lineage>
        <taxon>Bacteria</taxon>
        <taxon>Pseudomonadati</taxon>
        <taxon>Pseudomonadota</taxon>
        <taxon>Gammaproteobacteria</taxon>
        <taxon>Candidatus Pseudothioglobaceae</taxon>
        <taxon>Candidatus Ruthturnera</taxon>
    </lineage>
</organism>
<dbReference type="EC" id="3.6.5.3" evidence="2"/>
<dbReference type="EMBL" id="CP000488">
    <property type="protein sequence ID" value="ABL02539.1"/>
    <property type="molecule type" value="Genomic_DNA"/>
</dbReference>
<dbReference type="SMR" id="A1AX82"/>
<dbReference type="STRING" id="413404.Rmag_0818"/>
<dbReference type="KEGG" id="rma:Rmag_0818"/>
<dbReference type="eggNOG" id="COG0050">
    <property type="taxonomic scope" value="Bacteria"/>
</dbReference>
<dbReference type="HOGENOM" id="CLU_007265_0_0_6"/>
<dbReference type="OrthoDB" id="9803139at2"/>
<dbReference type="Proteomes" id="UP000002587">
    <property type="component" value="Chromosome"/>
</dbReference>
<dbReference type="GO" id="GO:0005737">
    <property type="term" value="C:cytoplasm"/>
    <property type="evidence" value="ECO:0007669"/>
    <property type="project" value="UniProtKB-SubCell"/>
</dbReference>
<dbReference type="GO" id="GO:0005525">
    <property type="term" value="F:GTP binding"/>
    <property type="evidence" value="ECO:0007669"/>
    <property type="project" value="UniProtKB-UniRule"/>
</dbReference>
<dbReference type="GO" id="GO:0003924">
    <property type="term" value="F:GTPase activity"/>
    <property type="evidence" value="ECO:0007669"/>
    <property type="project" value="InterPro"/>
</dbReference>
<dbReference type="GO" id="GO:0097216">
    <property type="term" value="F:guanosine tetraphosphate binding"/>
    <property type="evidence" value="ECO:0007669"/>
    <property type="project" value="UniProtKB-ARBA"/>
</dbReference>
<dbReference type="GO" id="GO:0003746">
    <property type="term" value="F:translation elongation factor activity"/>
    <property type="evidence" value="ECO:0007669"/>
    <property type="project" value="UniProtKB-UniRule"/>
</dbReference>
<dbReference type="CDD" id="cd01884">
    <property type="entry name" value="EF_Tu"/>
    <property type="match status" value="1"/>
</dbReference>
<dbReference type="CDD" id="cd03697">
    <property type="entry name" value="EFTU_II"/>
    <property type="match status" value="1"/>
</dbReference>
<dbReference type="CDD" id="cd03707">
    <property type="entry name" value="EFTU_III"/>
    <property type="match status" value="1"/>
</dbReference>
<dbReference type="FunFam" id="2.40.30.10:FF:000001">
    <property type="entry name" value="Elongation factor Tu"/>
    <property type="match status" value="1"/>
</dbReference>
<dbReference type="FunFam" id="3.40.50.300:FF:000003">
    <property type="entry name" value="Elongation factor Tu"/>
    <property type="match status" value="1"/>
</dbReference>
<dbReference type="Gene3D" id="3.40.50.300">
    <property type="entry name" value="P-loop containing nucleotide triphosphate hydrolases"/>
    <property type="match status" value="1"/>
</dbReference>
<dbReference type="Gene3D" id="2.40.30.10">
    <property type="entry name" value="Translation factors"/>
    <property type="match status" value="2"/>
</dbReference>
<dbReference type="HAMAP" id="MF_00118_B">
    <property type="entry name" value="EF_Tu_B"/>
    <property type="match status" value="1"/>
</dbReference>
<dbReference type="InterPro" id="IPR041709">
    <property type="entry name" value="EF-Tu_GTP-bd"/>
</dbReference>
<dbReference type="InterPro" id="IPR050055">
    <property type="entry name" value="EF-Tu_GTPase"/>
</dbReference>
<dbReference type="InterPro" id="IPR004161">
    <property type="entry name" value="EFTu-like_2"/>
</dbReference>
<dbReference type="InterPro" id="IPR033720">
    <property type="entry name" value="EFTU_2"/>
</dbReference>
<dbReference type="InterPro" id="IPR031157">
    <property type="entry name" value="G_TR_CS"/>
</dbReference>
<dbReference type="InterPro" id="IPR027417">
    <property type="entry name" value="P-loop_NTPase"/>
</dbReference>
<dbReference type="InterPro" id="IPR005225">
    <property type="entry name" value="Small_GTP-bd"/>
</dbReference>
<dbReference type="InterPro" id="IPR000795">
    <property type="entry name" value="T_Tr_GTP-bd_dom"/>
</dbReference>
<dbReference type="InterPro" id="IPR009000">
    <property type="entry name" value="Transl_B-barrel_sf"/>
</dbReference>
<dbReference type="InterPro" id="IPR009001">
    <property type="entry name" value="Transl_elong_EF1A/Init_IF2_C"/>
</dbReference>
<dbReference type="InterPro" id="IPR004541">
    <property type="entry name" value="Transl_elong_EFTu/EF1A_bac/org"/>
</dbReference>
<dbReference type="InterPro" id="IPR004160">
    <property type="entry name" value="Transl_elong_EFTu/EF1A_C"/>
</dbReference>
<dbReference type="NCBIfam" id="TIGR00485">
    <property type="entry name" value="EF-Tu"/>
    <property type="match status" value="1"/>
</dbReference>
<dbReference type="NCBIfam" id="NF000766">
    <property type="entry name" value="PRK00049.1"/>
    <property type="match status" value="1"/>
</dbReference>
<dbReference type="NCBIfam" id="NF009372">
    <property type="entry name" value="PRK12735.1"/>
    <property type="match status" value="1"/>
</dbReference>
<dbReference type="NCBIfam" id="NF009373">
    <property type="entry name" value="PRK12736.1"/>
    <property type="match status" value="1"/>
</dbReference>
<dbReference type="NCBIfam" id="TIGR00231">
    <property type="entry name" value="small_GTP"/>
    <property type="match status" value="1"/>
</dbReference>
<dbReference type="PANTHER" id="PTHR43721:SF22">
    <property type="entry name" value="ELONGATION FACTOR TU, MITOCHONDRIAL"/>
    <property type="match status" value="1"/>
</dbReference>
<dbReference type="PANTHER" id="PTHR43721">
    <property type="entry name" value="ELONGATION FACTOR TU-RELATED"/>
    <property type="match status" value="1"/>
</dbReference>
<dbReference type="Pfam" id="PF00009">
    <property type="entry name" value="GTP_EFTU"/>
    <property type="match status" value="1"/>
</dbReference>
<dbReference type="Pfam" id="PF03144">
    <property type="entry name" value="GTP_EFTU_D2"/>
    <property type="match status" value="1"/>
</dbReference>
<dbReference type="Pfam" id="PF03143">
    <property type="entry name" value="GTP_EFTU_D3"/>
    <property type="match status" value="1"/>
</dbReference>
<dbReference type="PRINTS" id="PR00315">
    <property type="entry name" value="ELONGATNFCT"/>
</dbReference>
<dbReference type="SUPFAM" id="SSF50465">
    <property type="entry name" value="EF-Tu/eEF-1alpha/eIF2-gamma C-terminal domain"/>
    <property type="match status" value="1"/>
</dbReference>
<dbReference type="SUPFAM" id="SSF52540">
    <property type="entry name" value="P-loop containing nucleoside triphosphate hydrolases"/>
    <property type="match status" value="1"/>
</dbReference>
<dbReference type="SUPFAM" id="SSF50447">
    <property type="entry name" value="Translation proteins"/>
    <property type="match status" value="1"/>
</dbReference>
<dbReference type="PROSITE" id="PS00301">
    <property type="entry name" value="G_TR_1"/>
    <property type="match status" value="1"/>
</dbReference>
<dbReference type="PROSITE" id="PS51722">
    <property type="entry name" value="G_TR_2"/>
    <property type="match status" value="1"/>
</dbReference>
<name>EFTU2_RUTMC</name>
<protein>
    <recommendedName>
        <fullName evidence="2">Elongation factor Tu 2</fullName>
        <shortName evidence="2">EF-Tu 2</shortName>
        <ecNumber evidence="2">3.6.5.3</ecNumber>
    </recommendedName>
</protein>